<accession>F1R3W0</accession>
<accession>Q5RIQ5</accession>
<accession>Q6DRH0</accession>
<keyword id="KW-0238">DNA-binding</keyword>
<keyword id="KW-0479">Metal-binding</keyword>
<keyword id="KW-0539">Nucleus</keyword>
<keyword id="KW-1185">Reference proteome</keyword>
<keyword id="KW-0804">Transcription</keyword>
<keyword id="KW-0805">Transcription regulation</keyword>
<keyword id="KW-0862">Zinc</keyword>
<keyword id="KW-0863">Zinc-finger</keyword>
<feature type="chain" id="PRO_0000416871" description="TATA box-binding protein-associated factor RNA polymerase I subunit B">
    <location>
        <begin position="1"/>
        <end position="576"/>
    </location>
</feature>
<feature type="zinc finger region" description="RRN7-type">
    <location>
        <begin position="6"/>
        <end position="39"/>
    </location>
</feature>
<feature type="region of interest" description="B-reader" evidence="1">
    <location>
        <begin position="40"/>
        <end position="70"/>
    </location>
</feature>
<feature type="region of interest" description="B-linker" evidence="1">
    <location>
        <begin position="71"/>
        <end position="73"/>
    </location>
</feature>
<feature type="region of interest" description="N-terminal cyclin fold" evidence="1">
    <location>
        <begin position="74"/>
        <end position="246"/>
    </location>
</feature>
<feature type="region of interest" description="Disordered" evidence="2">
    <location>
        <begin position="137"/>
        <end position="157"/>
    </location>
</feature>
<feature type="region of interest" description="C-terminal cyclin fold" evidence="1">
    <location>
        <begin position="247"/>
        <end position="357"/>
    </location>
</feature>
<feature type="binding site" evidence="1">
    <location>
        <position position="13"/>
    </location>
    <ligand>
        <name>Zn(2+)</name>
        <dbReference type="ChEBI" id="CHEBI:29105"/>
    </ligand>
</feature>
<feature type="binding site" evidence="1">
    <location>
        <position position="16"/>
    </location>
    <ligand>
        <name>Zn(2+)</name>
        <dbReference type="ChEBI" id="CHEBI:29105"/>
    </ligand>
</feature>
<feature type="binding site" evidence="1">
    <location>
        <position position="31"/>
    </location>
    <ligand>
        <name>Zn(2+)</name>
        <dbReference type="ChEBI" id="CHEBI:29105"/>
    </ligand>
</feature>
<feature type="binding site" evidence="1">
    <location>
        <position position="34"/>
    </location>
    <ligand>
        <name>Zn(2+)</name>
        <dbReference type="ChEBI" id="CHEBI:29105"/>
    </ligand>
</feature>
<name>TAF1B_DANRE</name>
<proteinExistence type="evidence at transcript level"/>
<protein>
    <recommendedName>
        <fullName>TATA box-binding protein-associated factor RNA polymerase I subunit B</fullName>
    </recommendedName>
    <alternativeName>
        <fullName>RNA polymerase I-specific TBP-associated factor 63 kDa</fullName>
        <shortName>TAFI63</shortName>
    </alternativeName>
    <alternativeName>
        <fullName>TATA box-binding protein-associated factor 1B</fullName>
        <shortName>TBP-associated factor 1B</shortName>
    </alternativeName>
</protein>
<comment type="function">
    <text evidence="1">Component of RNA polymerase I core factor complex that acts as a GTF2B/TFIIB-like factor and plays a key role in multiple steps during transcription initiation such as pre-initiation complex (PIC) assembly and postpolymerase recruitment events in polymerase I (Pol I) transcription. Binds rDNA promoters and plays a role in Pol I recruitment (By similarity).</text>
</comment>
<comment type="subcellular location">
    <subcellularLocation>
        <location evidence="1">Nucleus</location>
        <location evidence="1">Nucleolus</location>
    </subcellularLocation>
</comment>
<comment type="domain">
    <text evidence="1">Although it shares weak sequence similarity with GTF2B/TFIIB, displays a similar subdomain organization as GTF2B/TFIIB, with a N-terminal zinc finger, a connecting region (composed of B-reader and B-linker regions), followed by 2 cyclin folds. The RRN7-type zinc finger plays an essential postrecruitment role in Pol I transcription at a step preceding synthesis of the first 40 nucleotides (By similarity).</text>
</comment>
<comment type="similarity">
    <text evidence="3">Belongs to the RRN7/TAF1B family.</text>
</comment>
<comment type="sequence caution" evidence="3">
    <conflict type="erroneous gene model prediction">
        <sequence resource="EMBL-CDS" id="CAI21238"/>
    </conflict>
</comment>
<sequence>MDEQITGGYSEPCGQCAAVDWGVSDEGQFFCKSCHNVIEKIREVEDVTSLHHKHGRISIVRKPKKKKHDSEREWLVCEGFQFILKHQAKALVSLGVCMKFETEVLWNFWKRYLQNTRQAFTENPVSTARFEVFMKSQSGSESDTQSHQSCYSEASSDTEMSVSGISVDGRSAVSSESLHSIPQKGRRGRVSNLMSMPRTLAMCYLALLWVREAITLTDLLRMVAEGHIPYLHLHETFPAEMRMFGKDVQIFRVLFFPSYAFIKKEALVLAKIMKLPSFPTISQDCLFHPVPLTVRYLLEANLPDALHVWVQKVITGAGMDSDSFLTFDPTDKKPHLLSYDVQAVAVIIVAMKLLFKLDDHVEWKLSHDAAKKKNNKVFSLERWFNIVQPVLEQARLKEEQEEARRQWNFANPFITNLKRKSLVLKKRRVTDHLQQRFQKFADPAPEQSTSTTNSHTSFRFSWGEEEGSDGPSMFNQNLDCTVKAKAVNGLANQRYWHPELRICPENKCVSHFSKFEPSLPRMFVWVLDLFSFILGVLQSDVYEEVLNVERRFLKKNYRLDSRLTSSHLKKKKGPIL</sequence>
<gene>
    <name type="primary">taf1b</name>
    <name type="ORF">si:dkey-81b15.4</name>
</gene>
<evidence type="ECO:0000250" key="1"/>
<evidence type="ECO:0000256" key="2">
    <source>
        <dbReference type="SAM" id="MobiDB-lite"/>
    </source>
</evidence>
<evidence type="ECO:0000305" key="3"/>
<organism>
    <name type="scientific">Danio rerio</name>
    <name type="common">Zebrafish</name>
    <name type="synonym">Brachydanio rerio</name>
    <dbReference type="NCBI Taxonomy" id="7955"/>
    <lineage>
        <taxon>Eukaryota</taxon>
        <taxon>Metazoa</taxon>
        <taxon>Chordata</taxon>
        <taxon>Craniata</taxon>
        <taxon>Vertebrata</taxon>
        <taxon>Euteleostomi</taxon>
        <taxon>Actinopterygii</taxon>
        <taxon>Neopterygii</taxon>
        <taxon>Teleostei</taxon>
        <taxon>Ostariophysi</taxon>
        <taxon>Cypriniformes</taxon>
        <taxon>Danionidae</taxon>
        <taxon>Danioninae</taxon>
        <taxon>Danio</taxon>
    </lineage>
</organism>
<reference key="1">
    <citation type="journal article" date="2004" name="Proc. Natl. Acad. Sci. U.S.A.">
        <title>Identification of 315 genes essential for early zebrafish development.</title>
        <authorList>
            <person name="Amsterdam A."/>
            <person name="Nissen R.M."/>
            <person name="Sun Z."/>
            <person name="Swindell E.C."/>
            <person name="Farrington S."/>
            <person name="Hopkins N."/>
        </authorList>
    </citation>
    <scope>NUCLEOTIDE SEQUENCE [LARGE SCALE MRNA]</scope>
</reference>
<reference key="2">
    <citation type="journal article" date="2013" name="Nature">
        <title>The zebrafish reference genome sequence and its relationship to the human genome.</title>
        <authorList>
            <person name="Howe K."/>
            <person name="Clark M.D."/>
            <person name="Torroja C.F."/>
            <person name="Torrance J."/>
            <person name="Berthelot C."/>
            <person name="Muffato M."/>
            <person name="Collins J.E."/>
            <person name="Humphray S."/>
            <person name="McLaren K."/>
            <person name="Matthews L."/>
            <person name="McLaren S."/>
            <person name="Sealy I."/>
            <person name="Caccamo M."/>
            <person name="Churcher C."/>
            <person name="Scott C."/>
            <person name="Barrett J.C."/>
            <person name="Koch R."/>
            <person name="Rauch G.J."/>
            <person name="White S."/>
            <person name="Chow W."/>
            <person name="Kilian B."/>
            <person name="Quintais L.T."/>
            <person name="Guerra-Assuncao J.A."/>
            <person name="Zhou Y."/>
            <person name="Gu Y."/>
            <person name="Yen J."/>
            <person name="Vogel J.H."/>
            <person name="Eyre T."/>
            <person name="Redmond S."/>
            <person name="Banerjee R."/>
            <person name="Chi J."/>
            <person name="Fu B."/>
            <person name="Langley E."/>
            <person name="Maguire S.F."/>
            <person name="Laird G.K."/>
            <person name="Lloyd D."/>
            <person name="Kenyon E."/>
            <person name="Donaldson S."/>
            <person name="Sehra H."/>
            <person name="Almeida-King J."/>
            <person name="Loveland J."/>
            <person name="Trevanion S."/>
            <person name="Jones M."/>
            <person name="Quail M."/>
            <person name="Willey D."/>
            <person name="Hunt A."/>
            <person name="Burton J."/>
            <person name="Sims S."/>
            <person name="McLay K."/>
            <person name="Plumb B."/>
            <person name="Davis J."/>
            <person name="Clee C."/>
            <person name="Oliver K."/>
            <person name="Clark R."/>
            <person name="Riddle C."/>
            <person name="Elliot D."/>
            <person name="Threadgold G."/>
            <person name="Harden G."/>
            <person name="Ware D."/>
            <person name="Begum S."/>
            <person name="Mortimore B."/>
            <person name="Kerry G."/>
            <person name="Heath P."/>
            <person name="Phillimore B."/>
            <person name="Tracey A."/>
            <person name="Corby N."/>
            <person name="Dunn M."/>
            <person name="Johnson C."/>
            <person name="Wood J."/>
            <person name="Clark S."/>
            <person name="Pelan S."/>
            <person name="Griffiths G."/>
            <person name="Smith M."/>
            <person name="Glithero R."/>
            <person name="Howden P."/>
            <person name="Barker N."/>
            <person name="Lloyd C."/>
            <person name="Stevens C."/>
            <person name="Harley J."/>
            <person name="Holt K."/>
            <person name="Panagiotidis G."/>
            <person name="Lovell J."/>
            <person name="Beasley H."/>
            <person name="Henderson C."/>
            <person name="Gordon D."/>
            <person name="Auger K."/>
            <person name="Wright D."/>
            <person name="Collins J."/>
            <person name="Raisen C."/>
            <person name="Dyer L."/>
            <person name="Leung K."/>
            <person name="Robertson L."/>
            <person name="Ambridge K."/>
            <person name="Leongamornlert D."/>
            <person name="McGuire S."/>
            <person name="Gilderthorp R."/>
            <person name="Griffiths C."/>
            <person name="Manthravadi D."/>
            <person name="Nichol S."/>
            <person name="Barker G."/>
            <person name="Whitehead S."/>
            <person name="Kay M."/>
            <person name="Brown J."/>
            <person name="Murnane C."/>
            <person name="Gray E."/>
            <person name="Humphries M."/>
            <person name="Sycamore N."/>
            <person name="Barker D."/>
            <person name="Saunders D."/>
            <person name="Wallis J."/>
            <person name="Babbage A."/>
            <person name="Hammond S."/>
            <person name="Mashreghi-Mohammadi M."/>
            <person name="Barr L."/>
            <person name="Martin S."/>
            <person name="Wray P."/>
            <person name="Ellington A."/>
            <person name="Matthews N."/>
            <person name="Ellwood M."/>
            <person name="Woodmansey R."/>
            <person name="Clark G."/>
            <person name="Cooper J."/>
            <person name="Tromans A."/>
            <person name="Grafham D."/>
            <person name="Skuce C."/>
            <person name="Pandian R."/>
            <person name="Andrews R."/>
            <person name="Harrison E."/>
            <person name="Kimberley A."/>
            <person name="Garnett J."/>
            <person name="Fosker N."/>
            <person name="Hall R."/>
            <person name="Garner P."/>
            <person name="Kelly D."/>
            <person name="Bird C."/>
            <person name="Palmer S."/>
            <person name="Gehring I."/>
            <person name="Berger A."/>
            <person name="Dooley C.M."/>
            <person name="Ersan-Urun Z."/>
            <person name="Eser C."/>
            <person name="Geiger H."/>
            <person name="Geisler M."/>
            <person name="Karotki L."/>
            <person name="Kirn A."/>
            <person name="Konantz J."/>
            <person name="Konantz M."/>
            <person name="Oberlander M."/>
            <person name="Rudolph-Geiger S."/>
            <person name="Teucke M."/>
            <person name="Lanz C."/>
            <person name="Raddatz G."/>
            <person name="Osoegawa K."/>
            <person name="Zhu B."/>
            <person name="Rapp A."/>
            <person name="Widaa S."/>
            <person name="Langford C."/>
            <person name="Yang F."/>
            <person name="Schuster S.C."/>
            <person name="Carter N.P."/>
            <person name="Harrow J."/>
            <person name="Ning Z."/>
            <person name="Herrero J."/>
            <person name="Searle S.M."/>
            <person name="Enright A."/>
            <person name="Geisler R."/>
            <person name="Plasterk R.H."/>
            <person name="Lee C."/>
            <person name="Westerfield M."/>
            <person name="de Jong P.J."/>
            <person name="Zon L.I."/>
            <person name="Postlethwait J.H."/>
            <person name="Nusslein-Volhard C."/>
            <person name="Hubbard T.J."/>
            <person name="Roest Crollius H."/>
            <person name="Rogers J."/>
            <person name="Stemple D.L."/>
        </authorList>
    </citation>
    <scope>NUCLEOTIDE SEQUENCE [LARGE SCALE GENOMIC DNA]</scope>
    <source>
        <strain>Tuebingen</strain>
    </source>
</reference>
<dbReference type="EMBL" id="AY648789">
    <property type="protein sequence ID" value="AAT68107.1"/>
    <property type="molecule type" value="mRNA"/>
</dbReference>
<dbReference type="EMBL" id="BX248136">
    <property type="protein sequence ID" value="CAI21238.1"/>
    <property type="status" value="ALT_SEQ"/>
    <property type="molecule type" value="Genomic_DNA"/>
</dbReference>
<dbReference type="FunCoup" id="F1R3W0">
    <property type="interactions" value="717"/>
</dbReference>
<dbReference type="STRING" id="7955.ENSDARP00000049223"/>
<dbReference type="PaxDb" id="7955-ENSDARP00000049223"/>
<dbReference type="Ensembl" id="ENSDART00000049224">
    <property type="protein sequence ID" value="ENSDARP00000049223"/>
    <property type="gene ID" value="ENSDARG00000028937"/>
</dbReference>
<dbReference type="AGR" id="ZFIN:ZDB-GENE-041008-2"/>
<dbReference type="ZFIN" id="ZDB-GENE-041008-2">
    <property type="gene designation" value="taf1b"/>
</dbReference>
<dbReference type="eggNOG" id="ENOG502QVGU">
    <property type="taxonomic scope" value="Eukaryota"/>
</dbReference>
<dbReference type="InParanoid" id="F1R3W0"/>
<dbReference type="OMA" id="SFRFCWG"/>
<dbReference type="PhylomeDB" id="F1R3W0"/>
<dbReference type="TreeFam" id="TF324353"/>
<dbReference type="PRO" id="PR:F1R3W0"/>
<dbReference type="Proteomes" id="UP000000437">
    <property type="component" value="Unplaced"/>
</dbReference>
<dbReference type="Bgee" id="ENSDARG00000028937">
    <property type="expression patterns" value="Expressed in tail and 21 other cell types or tissues"/>
</dbReference>
<dbReference type="ExpressionAtlas" id="F1R3W0">
    <property type="expression patterns" value="baseline"/>
</dbReference>
<dbReference type="GO" id="GO:0070860">
    <property type="term" value="C:RNA polymerase I core factor complex"/>
    <property type="evidence" value="ECO:0000318"/>
    <property type="project" value="GO_Central"/>
</dbReference>
<dbReference type="GO" id="GO:0005668">
    <property type="term" value="C:RNA polymerase transcription factor SL1 complex"/>
    <property type="evidence" value="ECO:0000318"/>
    <property type="project" value="GO_Central"/>
</dbReference>
<dbReference type="GO" id="GO:0001164">
    <property type="term" value="F:RNA polymerase I core promoter sequence-specific DNA binding"/>
    <property type="evidence" value="ECO:0000250"/>
    <property type="project" value="UniProtKB"/>
</dbReference>
<dbReference type="GO" id="GO:0008270">
    <property type="term" value="F:zinc ion binding"/>
    <property type="evidence" value="ECO:0007669"/>
    <property type="project" value="UniProtKB-KW"/>
</dbReference>
<dbReference type="GO" id="GO:0042790">
    <property type="term" value="P:nucleolar large rRNA transcription by RNA polymerase I"/>
    <property type="evidence" value="ECO:0000318"/>
    <property type="project" value="GO_Central"/>
</dbReference>
<dbReference type="GO" id="GO:0001188">
    <property type="term" value="P:RNA polymerase I preinitiation complex assembly"/>
    <property type="evidence" value="ECO:0000250"/>
    <property type="project" value="UniProtKB"/>
</dbReference>
<dbReference type="InterPro" id="IPR048538">
    <property type="entry name" value="Rrn7_cyclin_C"/>
</dbReference>
<dbReference type="InterPro" id="IPR048540">
    <property type="entry name" value="Rrn7_cyclin_N"/>
</dbReference>
<dbReference type="InterPro" id="IPR033599">
    <property type="entry name" value="TAF1B/Rrn7"/>
</dbReference>
<dbReference type="InterPro" id="IPR021752">
    <property type="entry name" value="TF_Rrn7_Zf"/>
</dbReference>
<dbReference type="PANTHER" id="PTHR31576">
    <property type="entry name" value="TATA BOX-BINDING PROTEIN-ASSOCIATED FACTOR RNA POLYMERASE I SUBUNIT B"/>
    <property type="match status" value="1"/>
</dbReference>
<dbReference type="PANTHER" id="PTHR31576:SF2">
    <property type="entry name" value="TATA BOX-BINDING PROTEIN-ASSOCIATED FACTOR RNA POLYMERASE I SUBUNIT B"/>
    <property type="match status" value="1"/>
</dbReference>
<dbReference type="Pfam" id="PF20645">
    <property type="entry name" value="Rrn7_cyclin_C"/>
    <property type="match status" value="1"/>
</dbReference>
<dbReference type="Pfam" id="PF20644">
    <property type="entry name" value="Rrn7_cyclin_N"/>
    <property type="match status" value="1"/>
</dbReference>
<dbReference type="Pfam" id="PF11781">
    <property type="entry name" value="Zn_ribbon_RRN7"/>
    <property type="match status" value="1"/>
</dbReference>